<accession>Q24JP1</accession>
<accession>Q4WAE2</accession>
<feature type="chain" id="PRO_0000393863" description="Protein alcS">
    <location>
        <begin position="1"/>
        <end position="272"/>
    </location>
</feature>
<feature type="transmembrane region" description="Helical" evidence="2">
    <location>
        <begin position="63"/>
        <end position="83"/>
    </location>
</feature>
<feature type="transmembrane region" description="Helical" evidence="2">
    <location>
        <begin position="91"/>
        <end position="111"/>
    </location>
</feature>
<feature type="transmembrane region" description="Helical" evidence="2">
    <location>
        <begin position="122"/>
        <end position="144"/>
    </location>
</feature>
<feature type="transmembrane region" description="Helical" evidence="2">
    <location>
        <begin position="164"/>
        <end position="184"/>
    </location>
</feature>
<feature type="transmembrane region" description="Helical" evidence="2">
    <location>
        <begin position="192"/>
        <end position="212"/>
    </location>
</feature>
<feature type="transmembrane region" description="Helical" evidence="2">
    <location>
        <begin position="225"/>
        <end position="245"/>
    </location>
</feature>
<feature type="region of interest" description="Disordered" evidence="3">
    <location>
        <begin position="1"/>
        <end position="21"/>
    </location>
</feature>
<feature type="compositionally biased region" description="Polar residues" evidence="3">
    <location>
        <begin position="1"/>
        <end position="14"/>
    </location>
</feature>
<gene>
    <name evidence="5" type="primary">alcS</name>
    <name type="ORF">AFUA_7G00990</name>
</gene>
<proteinExistence type="inferred from homology"/>
<keyword id="KW-1003">Cell membrane</keyword>
<keyword id="KW-0472">Membrane</keyword>
<keyword id="KW-1185">Reference proteome</keyword>
<keyword id="KW-0812">Transmembrane</keyword>
<keyword id="KW-1133">Transmembrane helix</keyword>
<comment type="subcellular location">
    <subcellularLocation>
        <location>Cell membrane</location>
        <topology>Multi-pass membrane protein</topology>
    </subcellularLocation>
    <subcellularLocation>
        <location evidence="1 2">Cell septum</location>
    </subcellularLocation>
</comment>
<comment type="similarity">
    <text evidence="4">Belongs to the acetate uptake transporter (AceTr) (TC 2.A.96) family.</text>
</comment>
<comment type="sequence caution" evidence="4">
    <conflict type="erroneous gene model prediction">
        <sequence resource="EMBL-CDS" id="EAL84794"/>
    </conflict>
</comment>
<protein>
    <recommendedName>
        <fullName>Protein alcS</fullName>
    </recommendedName>
</protein>
<reference evidence="6" key="1">
    <citation type="journal article" date="2005" name="Nature">
        <title>Genomic sequence of the pathogenic and allergenic filamentous fungus Aspergillus fumigatus.</title>
        <authorList>
            <person name="Nierman W.C."/>
            <person name="Pain A."/>
            <person name="Anderson M.J."/>
            <person name="Wortman J.R."/>
            <person name="Kim H.S."/>
            <person name="Arroyo J."/>
            <person name="Berriman M."/>
            <person name="Abe K."/>
            <person name="Archer D.B."/>
            <person name="Bermejo C."/>
            <person name="Bennett J.W."/>
            <person name="Bowyer P."/>
            <person name="Chen D."/>
            <person name="Collins M."/>
            <person name="Coulsen R."/>
            <person name="Davies R."/>
            <person name="Dyer P.S."/>
            <person name="Farman M.L."/>
            <person name="Fedorova N."/>
            <person name="Fedorova N.D."/>
            <person name="Feldblyum T.V."/>
            <person name="Fischer R."/>
            <person name="Fosker N."/>
            <person name="Fraser A."/>
            <person name="Garcia J.L."/>
            <person name="Garcia M.J."/>
            <person name="Goble A."/>
            <person name="Goldman G.H."/>
            <person name="Gomi K."/>
            <person name="Griffith-Jones S."/>
            <person name="Gwilliam R."/>
            <person name="Haas B.J."/>
            <person name="Haas H."/>
            <person name="Harris D.E."/>
            <person name="Horiuchi H."/>
            <person name="Huang J."/>
            <person name="Humphray S."/>
            <person name="Jimenez J."/>
            <person name="Keller N."/>
            <person name="Khouri H."/>
            <person name="Kitamoto K."/>
            <person name="Kobayashi T."/>
            <person name="Konzack S."/>
            <person name="Kulkarni R."/>
            <person name="Kumagai T."/>
            <person name="Lafton A."/>
            <person name="Latge J.-P."/>
            <person name="Li W."/>
            <person name="Lord A."/>
            <person name="Lu C."/>
            <person name="Majoros W.H."/>
            <person name="May G.S."/>
            <person name="Miller B.L."/>
            <person name="Mohamoud Y."/>
            <person name="Molina M."/>
            <person name="Monod M."/>
            <person name="Mouyna I."/>
            <person name="Mulligan S."/>
            <person name="Murphy L.D."/>
            <person name="O'Neil S."/>
            <person name="Paulsen I."/>
            <person name="Penalva M.A."/>
            <person name="Pertea M."/>
            <person name="Price C."/>
            <person name="Pritchard B.L."/>
            <person name="Quail M.A."/>
            <person name="Rabbinowitsch E."/>
            <person name="Rawlins N."/>
            <person name="Rajandream M.A."/>
            <person name="Reichard U."/>
            <person name="Renauld H."/>
            <person name="Robson G.D."/>
            <person name="Rodriguez de Cordoba S."/>
            <person name="Rodriguez-Pena J.M."/>
            <person name="Ronning C.M."/>
            <person name="Rutter S."/>
            <person name="Salzberg S.L."/>
            <person name="Sanchez M."/>
            <person name="Sanchez-Ferrero J.C."/>
            <person name="Saunders D."/>
            <person name="Seeger K."/>
            <person name="Squares R."/>
            <person name="Squares S."/>
            <person name="Takeuchi M."/>
            <person name="Tekaia F."/>
            <person name="Turner G."/>
            <person name="Vazquez de Aldana C.R."/>
            <person name="Weidman J."/>
            <person name="White O."/>
            <person name="Woodward J.R."/>
            <person name="Yu J.-H."/>
            <person name="Fraser C.M."/>
            <person name="Galagan J.E."/>
            <person name="Asai K."/>
            <person name="Machida M."/>
            <person name="Hall N."/>
            <person name="Barrell B.G."/>
            <person name="Denning D.W."/>
        </authorList>
    </citation>
    <scope>NUCLEOTIDE SEQUENCE [LARGE SCALE GENOMIC DNA]</scope>
    <source>
        <strain>ATCC MYA-4609 / CBS 101355 / FGSC A1100 / Af293</strain>
    </source>
</reference>
<reference evidence="5" key="2">
    <citation type="journal article" date="2006" name="Fungal Genet. Biol.">
        <title>Functional analysis of alcS, a gene of the alc cluster in Aspergillus nidulans.</title>
        <authorList>
            <person name="Flipphi M."/>
            <person name="Robellet X."/>
            <person name="Dequier E."/>
            <person name="Leschelle X."/>
            <person name="Felenbok B."/>
            <person name="Velot C."/>
        </authorList>
    </citation>
    <scope>IDENTIFICATION</scope>
</reference>
<dbReference type="EMBL" id="AAHF01000015">
    <property type="protein sequence ID" value="EAL84794.2"/>
    <property type="status" value="ALT_SEQ"/>
    <property type="molecule type" value="Genomic_DNA"/>
</dbReference>
<dbReference type="EMBL" id="BK005755">
    <property type="protein sequence ID" value="DAA05752.1"/>
    <property type="molecule type" value="Genomic_DNA"/>
</dbReference>
<dbReference type="RefSeq" id="XP_746832.2">
    <property type="nucleotide sequence ID" value="XM_741739.2"/>
</dbReference>
<dbReference type="SMR" id="Q24JP1"/>
<dbReference type="STRING" id="330879.Q24JP1"/>
<dbReference type="GeneID" id="3504140"/>
<dbReference type="KEGG" id="afm:AFUA_7G00990"/>
<dbReference type="eggNOG" id="ENOG502S179">
    <property type="taxonomic scope" value="Eukaryota"/>
</dbReference>
<dbReference type="HOGENOM" id="CLU_051062_4_0_1"/>
<dbReference type="InParanoid" id="Q24JP1"/>
<dbReference type="OrthoDB" id="3648309at2759"/>
<dbReference type="Proteomes" id="UP000002530">
    <property type="component" value="Chromosome 7"/>
</dbReference>
<dbReference type="GO" id="GO:0030428">
    <property type="term" value="C:cell septum"/>
    <property type="evidence" value="ECO:0007669"/>
    <property type="project" value="UniProtKB-SubCell"/>
</dbReference>
<dbReference type="GO" id="GO:0005886">
    <property type="term" value="C:plasma membrane"/>
    <property type="evidence" value="ECO:0000318"/>
    <property type="project" value="GO_Central"/>
</dbReference>
<dbReference type="GO" id="GO:0015123">
    <property type="term" value="F:acetate transmembrane transporter activity"/>
    <property type="evidence" value="ECO:0000318"/>
    <property type="project" value="GO_Central"/>
</dbReference>
<dbReference type="InterPro" id="IPR051633">
    <property type="entry name" value="AceTr"/>
</dbReference>
<dbReference type="InterPro" id="IPR000791">
    <property type="entry name" value="Gpr1/Fun34/SatP-like"/>
</dbReference>
<dbReference type="PANTHER" id="PTHR31123">
    <property type="entry name" value="ACCUMULATION OF DYADS PROTEIN 2-RELATED"/>
    <property type="match status" value="1"/>
</dbReference>
<dbReference type="PANTHER" id="PTHR31123:SF4">
    <property type="entry name" value="PROTEIN ALCS"/>
    <property type="match status" value="1"/>
</dbReference>
<dbReference type="Pfam" id="PF01184">
    <property type="entry name" value="Gpr1_Fun34_YaaH"/>
    <property type="match status" value="1"/>
</dbReference>
<sequence>MDTEQGLKNHTAKTSPHDETAMASLTTIPTSVTLSAEQFEKLYLSPLTQRQGMLSKQMGNPTPLALGGFVITTTPLSCCLMGWRGATGSGIAFTGPIIFLGGGLLVLTSILEFILGNTFPCVVFGTIGAFWFAFGCTMTPAFNAAAPFSTSATDTVAGLSSPDFLNTYAFLFIWMGVLMLIFLACATRTNAVYVAIFTTLTLVFGFLSGAYWRLAVADALVGNRLVVAAGACLFVASMLGFYLLVAQLFDSVGLPVRLPVGDLSRFWDRRAR</sequence>
<name>ALCS_ASPFU</name>
<evidence type="ECO:0000250" key="1">
    <source>
        <dbReference type="UniProtKB" id="Q460G9"/>
    </source>
</evidence>
<evidence type="ECO:0000255" key="2"/>
<evidence type="ECO:0000256" key="3">
    <source>
        <dbReference type="SAM" id="MobiDB-lite"/>
    </source>
</evidence>
<evidence type="ECO:0000305" key="4"/>
<evidence type="ECO:0000312" key="5">
    <source>
        <dbReference type="EMBL" id="DAA05752.1"/>
    </source>
</evidence>
<evidence type="ECO:0000312" key="6">
    <source>
        <dbReference type="EMBL" id="EAL84794.2"/>
    </source>
</evidence>
<organism>
    <name type="scientific">Aspergillus fumigatus (strain ATCC MYA-4609 / CBS 101355 / FGSC A1100 / Af293)</name>
    <name type="common">Neosartorya fumigata</name>
    <dbReference type="NCBI Taxonomy" id="330879"/>
    <lineage>
        <taxon>Eukaryota</taxon>
        <taxon>Fungi</taxon>
        <taxon>Dikarya</taxon>
        <taxon>Ascomycota</taxon>
        <taxon>Pezizomycotina</taxon>
        <taxon>Eurotiomycetes</taxon>
        <taxon>Eurotiomycetidae</taxon>
        <taxon>Eurotiales</taxon>
        <taxon>Aspergillaceae</taxon>
        <taxon>Aspergillus</taxon>
        <taxon>Aspergillus subgen. Fumigati</taxon>
    </lineage>
</organism>